<comment type="function">
    <text evidence="1">Able to inhibit growth in several cell lines.</text>
</comment>
<comment type="interaction">
    <interactant intactId="EBI-2130213">
        <id>Q99675</id>
    </interactant>
    <interactant intactId="EBI-3925742">
        <id>Q8TD06</id>
        <label>AGR3</label>
    </interactant>
    <organismsDiffer>false</organismsDiffer>
    <experiments>3</experiments>
</comment>
<comment type="interaction">
    <interactant intactId="EBI-2130213">
        <id>Q99675</id>
    </interactant>
    <interactant intactId="EBI-749204">
        <id>O15155</id>
        <label>BET1</label>
    </interactant>
    <organismsDiffer>false</organismsDiffer>
    <experiments>3</experiments>
</comment>
<comment type="interaction">
    <interactant intactId="EBI-2130213">
        <id>Q99675</id>
    </interactant>
    <interactant intactId="EBI-307924">
        <id>P21854</id>
        <label>CD72</label>
    </interactant>
    <organismsDiffer>false</organismsDiffer>
    <experiments>3</experiments>
</comment>
<comment type="interaction">
    <interactant intactId="EBI-2130213">
        <id>Q99675</id>
    </interactant>
    <interactant intactId="EBI-358858">
        <id>O14735</id>
        <label>CDIPT</label>
    </interactant>
    <organismsDiffer>false</organismsDiffer>
    <experiments>3</experiments>
</comment>
<comment type="interaction">
    <interactant intactId="EBI-2130213">
        <id>Q99675</id>
    </interactant>
    <interactant intactId="EBI-1058710">
        <id>O43169</id>
        <label>CYB5B</label>
    </interactant>
    <organismsDiffer>false</organismsDiffer>
    <experiments>3</experiments>
</comment>
<comment type="interaction">
    <interactant intactId="EBI-2130213">
        <id>Q99675</id>
    </interactant>
    <interactant intactId="EBI-12118888">
        <id>Q96D05-2</id>
        <label>FAM241B</label>
    </interactant>
    <organismsDiffer>false</organismsDiffer>
    <experiments>3</experiments>
</comment>
<comment type="interaction">
    <interactant intactId="EBI-2130213">
        <id>Q99675</id>
    </interactant>
    <interactant intactId="EBI-12142299">
        <id>Q96IV6</id>
        <label>FAXDC2</label>
    </interactant>
    <organismsDiffer>false</organismsDiffer>
    <experiments>3</experiments>
</comment>
<comment type="interaction">
    <interactant intactId="EBI-2130213">
        <id>Q99675</id>
    </interactant>
    <interactant intactId="EBI-2833872">
        <id>O15552</id>
        <label>FFAR2</label>
    </interactant>
    <organismsDiffer>false</organismsDiffer>
    <experiments>3</experiments>
</comment>
<comment type="interaction">
    <interactant intactId="EBI-2130213">
        <id>Q99675</id>
    </interactant>
    <interactant intactId="EBI-11955647">
        <id>Q8TDV0</id>
        <label>GPR151</label>
    </interactant>
    <organismsDiffer>false</organismsDiffer>
    <experiments>3</experiments>
</comment>
<comment type="interaction">
    <interactant intactId="EBI-2130213">
        <id>Q99675</id>
    </interactant>
    <interactant intactId="EBI-13345167">
        <id>Q8TDT2</id>
        <label>GPR152</label>
    </interactant>
    <organismsDiffer>false</organismsDiffer>
    <experiments>3</experiments>
</comment>
<comment type="interaction">
    <interactant intactId="EBI-2130213">
        <id>Q99675</id>
    </interactant>
    <interactant intactId="EBI-10266796">
        <id>Q8N5M9</id>
        <label>JAGN1</label>
    </interactant>
    <organismsDiffer>false</organismsDiffer>
    <experiments>3</experiments>
</comment>
<comment type="interaction">
    <interactant intactId="EBI-2130213">
        <id>Q99675</id>
    </interactant>
    <interactant intactId="EBI-9018187">
        <id>P26715</id>
        <label>KLRC1</label>
    </interactant>
    <organismsDiffer>false</organismsDiffer>
    <experiments>3</experiments>
</comment>
<comment type="interaction">
    <interactant intactId="EBI-2130213">
        <id>Q99675</id>
    </interactant>
    <interactant intactId="EBI-3267258">
        <id>Q86VI4</id>
        <label>LAPTM4B</label>
    </interactant>
    <organismsDiffer>false</organismsDiffer>
    <experiments>3</experiments>
</comment>
<comment type="interaction">
    <interactant intactId="EBI-2130213">
        <id>Q99675</id>
    </interactant>
    <interactant intactId="EBI-12133176">
        <id>Q9UIQ6-2</id>
        <label>LNPEP</label>
    </interactant>
    <organismsDiffer>false</organismsDiffer>
    <experiments>3</experiments>
</comment>
<comment type="interaction">
    <interactant intactId="EBI-2130213">
        <id>Q99675</id>
    </interactant>
    <interactant intactId="EBI-2341610">
        <id>Q9NX47</id>
        <label>MARCHF5</label>
    </interactant>
    <organismsDiffer>false</organismsDiffer>
    <experiments>3</experiments>
</comment>
<comment type="interaction">
    <interactant intactId="EBI-2130213">
        <id>Q99675</id>
    </interactant>
    <interactant intactId="EBI-3923617">
        <id>Q9H2K0</id>
        <label>MTIF3</label>
    </interactant>
    <organismsDiffer>false</organismsDiffer>
    <experiments>3</experiments>
</comment>
<comment type="interaction">
    <interactant intactId="EBI-2130213">
        <id>Q99675</id>
    </interactant>
    <interactant intactId="EBI-12092917">
        <id>Q9UHJ9-5</id>
        <label>PGAP2</label>
    </interactant>
    <organismsDiffer>false</organismsDiffer>
    <experiments>3</experiments>
</comment>
<comment type="interaction">
    <interactant intactId="EBI-2130213">
        <id>Q99675</id>
    </interactant>
    <interactant intactId="EBI-9916444">
        <id>Q8TEB9</id>
        <label>RHBDD1</label>
    </interactant>
    <organismsDiffer>false</organismsDiffer>
    <experiments>3</experiments>
</comment>
<comment type="interaction">
    <interactant intactId="EBI-2130213">
        <id>Q99675</id>
    </interactant>
    <interactant intactId="EBI-4403649">
        <id>Q969E2</id>
        <label>SCAMP4</label>
    </interactant>
    <organismsDiffer>false</organismsDiffer>
    <experiments>3</experiments>
</comment>
<comment type="interaction">
    <interactant intactId="EBI-2130213">
        <id>Q99675</id>
    </interactant>
    <interactant intactId="EBI-10294651">
        <id>Q99726</id>
        <label>SLC30A3</label>
    </interactant>
    <organismsDiffer>false</organismsDiffer>
    <experiments>3</experiments>
</comment>
<comment type="interaction">
    <interactant intactId="EBI-2130213">
        <id>Q99675</id>
    </interactant>
    <interactant intactId="EBI-10262251">
        <id>Q8IWU4</id>
        <label>SLC30A8</label>
    </interactant>
    <organismsDiffer>false</organismsDiffer>
    <experiments>3</experiments>
</comment>
<comment type="interaction">
    <interactant intactId="EBI-2130213">
        <id>Q99675</id>
    </interactant>
    <interactant intactId="EBI-18194029">
        <id>Q96L08</id>
        <label>SUSD3</label>
    </interactant>
    <organismsDiffer>false</organismsDiffer>
    <experiments>3</experiments>
</comment>
<comment type="interaction">
    <interactant intactId="EBI-2130213">
        <id>Q99675</id>
    </interactant>
    <interactant intactId="EBI-2844246">
        <id>Q9NV12</id>
        <label>TMEM140</label>
    </interactant>
    <organismsDiffer>false</organismsDiffer>
    <experiments>3</experiments>
</comment>
<comment type="interaction">
    <interactant intactId="EBI-2130213">
        <id>Q99675</id>
    </interactant>
    <interactant intactId="EBI-13046724">
        <id>Q14656</id>
        <label>TMEM187</label>
    </interactant>
    <organismsDiffer>false</organismsDiffer>
    <experiments>3</experiments>
</comment>
<comment type="interaction">
    <interactant intactId="EBI-2130213">
        <id>Q99675</id>
    </interactant>
    <interactant intactId="EBI-12111910">
        <id>Q5BJF2</id>
        <label>TMEM97</label>
    </interactant>
    <organismsDiffer>false</organismsDiffer>
    <experiments>3</experiments>
</comment>
<comment type="interaction">
    <interactant intactId="EBI-2130213">
        <id>Q99675</id>
    </interactant>
    <interactant intactId="EBI-17249488">
        <id>Q6ZUI0</id>
        <label>TPRG1</label>
    </interactant>
    <organismsDiffer>false</organismsDiffer>
    <experiments>3</experiments>
</comment>
<comment type="interaction">
    <interactant intactId="EBI-2130213">
        <id>Q99675</id>
    </interactant>
    <interactant intactId="EBI-751210">
        <id>Q96EC8</id>
        <label>YIPF6</label>
    </interactant>
    <organismsDiffer>false</organismsDiffer>
    <experiments>3</experiments>
</comment>
<comment type="interaction">
    <interactant intactId="EBI-2130213">
        <id>Q99675</id>
    </interactant>
    <interactant intactId="EBI-718439">
        <id>O95159</id>
        <label>ZFPL1</label>
    </interactant>
    <organismsDiffer>false</organismsDiffer>
    <experiments>3</experiments>
</comment>
<comment type="subcellular location">
    <subcellularLocation>
        <location evidence="3">Nucleus</location>
    </subcellularLocation>
    <subcellularLocation>
        <location evidence="4">Endoplasmic reticulum</location>
    </subcellularLocation>
</comment>
<comment type="tissue specificity">
    <text evidence="4">Ubiquitously expressed with high expression in testis and the cerebellum.</text>
</comment>
<comment type="induction">
    <text evidence="4">Up-regulated by endoplasmic reticulum (ER) stress triggered by thapsigargin or tunicamycin.</text>
</comment>
<reference key="1">
    <citation type="journal article" date="1996" name="Cancer Res.">
        <title>Induction of cell growth regulatory genes by p53.</title>
        <authorList>
            <person name="Madden S.L."/>
            <person name="Galella E.A."/>
            <person name="Riley D."/>
            <person name="Bertelsen A.H."/>
            <person name="Beaudry G.A."/>
        </authorList>
    </citation>
    <scope>NUCLEOTIDE SEQUENCE [MRNA]</scope>
    <source>
        <tissue>Fetal brain</tissue>
    </source>
</reference>
<reference key="2">
    <citation type="journal article" date="2004" name="Genome Res.">
        <title>The status, quality, and expansion of the NIH full-length cDNA project: the Mammalian Gene Collection (MGC).</title>
        <authorList>
            <consortium name="The MGC Project Team"/>
        </authorList>
    </citation>
    <scope>NUCLEOTIDE SEQUENCE [LARGE SCALE MRNA]</scope>
    <source>
        <tissue>Skeletal muscle</tissue>
    </source>
</reference>
<reference key="3">
    <citation type="journal article" date="2012" name="J. Proteomics">
        <title>Systematic validation of antibody binding and protein subcellular localization using siRNA and confocal microscopy.</title>
        <authorList>
            <person name="Stadler C."/>
            <person name="Hjelmare M."/>
            <person name="Neumann B."/>
            <person name="Jonasson K."/>
            <person name="Pepperkok R."/>
            <person name="Uhlen M."/>
            <person name="Lundberg E."/>
        </authorList>
    </citation>
    <scope>SUBCELLULAR LOCATION</scope>
</reference>
<reference key="4">
    <citation type="journal article" date="2016" name="Sci. Rep.">
        <title>Genome-wide identification and gene expression profiling of ubiquitin ligases for endoplasmic reticulum protein degradation.</title>
        <authorList>
            <person name="Kaneko M."/>
            <person name="Iwase I."/>
            <person name="Yamasaki Y."/>
            <person name="Takai T."/>
            <person name="Wu Y."/>
            <person name="Kanemoto S."/>
            <person name="Matsuhisa K."/>
            <person name="Asada R."/>
            <person name="Okuma Y."/>
            <person name="Watanabe T."/>
            <person name="Imaizumi K."/>
            <person name="Nomura Y."/>
        </authorList>
    </citation>
    <scope>SUBCELLULAR LOCATION</scope>
    <scope>TISSUE SPECIFICITY</scope>
    <scope>INDUCTION</scope>
</reference>
<reference key="5">
    <citation type="submission" date="2007-07" db="PDB data bank">
        <title>Solution structure of the RING domain of the human cell growth regulator with RING finger domain 1 protein.</title>
        <authorList>
            <consortium name="RIKEN structural genomics initiative (RSGI)"/>
        </authorList>
    </citation>
    <scope>STRUCTURE BY NMR OF 262-318</scope>
</reference>
<keyword id="KW-0002">3D-structure</keyword>
<keyword id="KW-0131">Cell cycle</keyword>
<keyword id="KW-0256">Endoplasmic reticulum</keyword>
<keyword id="KW-0338">Growth arrest</keyword>
<keyword id="KW-0479">Metal-binding</keyword>
<keyword id="KW-0539">Nucleus</keyword>
<keyword id="KW-1267">Proteomics identification</keyword>
<keyword id="KW-1185">Reference proteome</keyword>
<keyword id="KW-0862">Zinc</keyword>
<keyword id="KW-0863">Zinc-finger</keyword>
<evidence type="ECO:0000250" key="1">
    <source>
        <dbReference type="UniProtKB" id="P97587"/>
    </source>
</evidence>
<evidence type="ECO:0000255" key="2">
    <source>
        <dbReference type="PROSITE-ProRule" id="PRU00175"/>
    </source>
</evidence>
<evidence type="ECO:0000269" key="3">
    <source>
    </source>
</evidence>
<evidence type="ECO:0000269" key="4">
    <source>
    </source>
</evidence>
<evidence type="ECO:0000305" key="5"/>
<evidence type="ECO:0007829" key="6">
    <source>
        <dbReference type="PDB" id="2EA5"/>
    </source>
</evidence>
<organism>
    <name type="scientific">Homo sapiens</name>
    <name type="common">Human</name>
    <dbReference type="NCBI Taxonomy" id="9606"/>
    <lineage>
        <taxon>Eukaryota</taxon>
        <taxon>Metazoa</taxon>
        <taxon>Chordata</taxon>
        <taxon>Craniata</taxon>
        <taxon>Vertebrata</taxon>
        <taxon>Euteleostomi</taxon>
        <taxon>Mammalia</taxon>
        <taxon>Eutheria</taxon>
        <taxon>Euarchontoglires</taxon>
        <taxon>Primates</taxon>
        <taxon>Haplorrhini</taxon>
        <taxon>Catarrhini</taxon>
        <taxon>Hominidae</taxon>
        <taxon>Homo</taxon>
    </lineage>
</organism>
<accession>Q99675</accession>
<accession>Q96BX2</accession>
<proteinExistence type="evidence at protein level"/>
<name>CGRF1_HUMAN</name>
<feature type="chain" id="PRO_0000055869" description="Cell growth regulator with RING finger domain protein 1">
    <location>
        <begin position="1"/>
        <end position="332"/>
    </location>
</feature>
<feature type="zinc finger region" description="RING-type" evidence="2">
    <location>
        <begin position="274"/>
        <end position="309"/>
    </location>
</feature>
<feature type="sequence variant" id="VAR_052081" description="In dbSNP:rs11555279.">
    <original>C</original>
    <variation>Y</variation>
    <location>
        <position position="117"/>
    </location>
</feature>
<feature type="sequence conflict" description="In Ref. 2; AAH15063." evidence="5" ref="2">
    <original>S</original>
    <variation>N</variation>
    <location>
        <position position="103"/>
    </location>
</feature>
<feature type="strand" evidence="6">
    <location>
        <begin position="275"/>
        <end position="280"/>
    </location>
</feature>
<feature type="turn" evidence="6">
    <location>
        <begin position="287"/>
        <end position="290"/>
    </location>
</feature>
<feature type="helix" evidence="6">
    <location>
        <begin position="298"/>
        <end position="301"/>
    </location>
</feature>
<feature type="turn" evidence="6">
    <location>
        <begin position="306"/>
        <end position="308"/>
    </location>
</feature>
<sequence>MAAVFLVTLYEYSPLFYIAVVFTCFIVTTGLVLGWFGWDVPVILRNSEETQFSTRVFKKQMRQVKNPFGLEITNPSSASITTGITLTTDCLEDSLLTCYWGCSVQKLYEALQKHVYCFRISTPQALEDALYSEYLYQEQYFIKKDSKEEIYCQLPRDTKIEDFGTVPRSRYPLVALLTLADEDDREIYDIISMVSVIHIPDRTYKLSCRILYQYLLLAQGQFHDLKQLFMSANNNFTPSNNSSSEEKNTDRSLLEKVGLSESEVEPSEENSKDCVVCQNGTVNWVLLPCRHTCLCDGCVKYFQQCPMCRQFVQESFALCSQKEQDKDKPKTL</sequence>
<dbReference type="EMBL" id="U66469">
    <property type="protein sequence ID" value="AAC50897.1"/>
    <property type="molecule type" value="mRNA"/>
</dbReference>
<dbReference type="EMBL" id="BC015063">
    <property type="protein sequence ID" value="AAH15063.1"/>
    <property type="molecule type" value="mRNA"/>
</dbReference>
<dbReference type="CCDS" id="CCDS9719.1"/>
<dbReference type="RefSeq" id="NP_006559.1">
    <property type="nucleotide sequence ID" value="NM_006568.3"/>
</dbReference>
<dbReference type="PDB" id="2EA5">
    <property type="method" value="NMR"/>
    <property type="chains" value="A=264-318"/>
</dbReference>
<dbReference type="PDBsum" id="2EA5"/>
<dbReference type="SMR" id="Q99675"/>
<dbReference type="BioGRID" id="115910">
    <property type="interactions" value="108"/>
</dbReference>
<dbReference type="FunCoup" id="Q99675">
    <property type="interactions" value="3030"/>
</dbReference>
<dbReference type="IntAct" id="Q99675">
    <property type="interactions" value="77"/>
</dbReference>
<dbReference type="MINT" id="Q99675"/>
<dbReference type="STRING" id="9606.ENSP00000216420"/>
<dbReference type="iPTMnet" id="Q99675"/>
<dbReference type="PhosphoSitePlus" id="Q99675"/>
<dbReference type="BioMuta" id="CGRRF1"/>
<dbReference type="DMDM" id="44887778"/>
<dbReference type="jPOST" id="Q99675"/>
<dbReference type="MassIVE" id="Q99675"/>
<dbReference type="PaxDb" id="9606-ENSP00000216420"/>
<dbReference type="PeptideAtlas" id="Q99675"/>
<dbReference type="ProteomicsDB" id="78389"/>
<dbReference type="Antibodypedia" id="152">
    <property type="antibodies" value="177 antibodies from 30 providers"/>
</dbReference>
<dbReference type="DNASU" id="10668"/>
<dbReference type="Ensembl" id="ENST00000216420.12">
    <property type="protein sequence ID" value="ENSP00000216420.7"/>
    <property type="gene ID" value="ENSG00000100532.13"/>
</dbReference>
<dbReference type="GeneID" id="10668"/>
<dbReference type="KEGG" id="hsa:10668"/>
<dbReference type="MANE-Select" id="ENST00000216420.12">
    <property type="protein sequence ID" value="ENSP00000216420.7"/>
    <property type="RefSeq nucleotide sequence ID" value="NM_006568.3"/>
    <property type="RefSeq protein sequence ID" value="NP_006559.1"/>
</dbReference>
<dbReference type="UCSC" id="uc001xay.4">
    <property type="organism name" value="human"/>
</dbReference>
<dbReference type="AGR" id="HGNC:15528"/>
<dbReference type="CTD" id="10668"/>
<dbReference type="DisGeNET" id="10668"/>
<dbReference type="GeneCards" id="CGRRF1"/>
<dbReference type="HGNC" id="HGNC:15528">
    <property type="gene designation" value="CGRRF1"/>
</dbReference>
<dbReference type="HPA" id="ENSG00000100532">
    <property type="expression patterns" value="Low tissue specificity"/>
</dbReference>
<dbReference type="MIM" id="606138">
    <property type="type" value="gene"/>
</dbReference>
<dbReference type="neXtProt" id="NX_Q99675"/>
<dbReference type="OpenTargets" id="ENSG00000100532"/>
<dbReference type="PharmGKB" id="PA134985671"/>
<dbReference type="VEuPathDB" id="HostDB:ENSG00000100532"/>
<dbReference type="eggNOG" id="KOG4265">
    <property type="taxonomic scope" value="Eukaryota"/>
</dbReference>
<dbReference type="GeneTree" id="ENSGT00390000004542"/>
<dbReference type="HOGENOM" id="CLU_053217_0_0_1"/>
<dbReference type="InParanoid" id="Q99675"/>
<dbReference type="OMA" id="IYCQLPK"/>
<dbReference type="OrthoDB" id="10251219at2759"/>
<dbReference type="PAN-GO" id="Q99675">
    <property type="GO annotations" value="1 GO annotation based on evolutionary models"/>
</dbReference>
<dbReference type="PhylomeDB" id="Q99675"/>
<dbReference type="TreeFam" id="TF328102"/>
<dbReference type="PathwayCommons" id="Q99675"/>
<dbReference type="SignaLink" id="Q99675"/>
<dbReference type="SIGNOR" id="Q99675"/>
<dbReference type="BioGRID-ORCS" id="10668">
    <property type="hits" value="14 hits in 1197 CRISPR screens"/>
</dbReference>
<dbReference type="ChiTaRS" id="CGRRF1">
    <property type="organism name" value="human"/>
</dbReference>
<dbReference type="EvolutionaryTrace" id="Q99675"/>
<dbReference type="GenomeRNAi" id="10668"/>
<dbReference type="Pharos" id="Q99675">
    <property type="development level" value="Tdark"/>
</dbReference>
<dbReference type="PRO" id="PR:Q99675"/>
<dbReference type="Proteomes" id="UP000005640">
    <property type="component" value="Chromosome 14"/>
</dbReference>
<dbReference type="RNAct" id="Q99675">
    <property type="molecule type" value="protein"/>
</dbReference>
<dbReference type="Bgee" id="ENSG00000100532">
    <property type="expression patterns" value="Expressed in primordial germ cell in gonad and 210 other cell types or tissues"/>
</dbReference>
<dbReference type="ExpressionAtlas" id="Q99675">
    <property type="expression patterns" value="baseline and differential"/>
</dbReference>
<dbReference type="GO" id="GO:0005783">
    <property type="term" value="C:endoplasmic reticulum"/>
    <property type="evidence" value="ECO:0000314"/>
    <property type="project" value="UniProtKB"/>
</dbReference>
<dbReference type="GO" id="GO:0043231">
    <property type="term" value="C:intracellular membrane-bounded organelle"/>
    <property type="evidence" value="ECO:0000314"/>
    <property type="project" value="HPA"/>
</dbReference>
<dbReference type="GO" id="GO:0005654">
    <property type="term" value="C:nucleoplasm"/>
    <property type="evidence" value="ECO:0000314"/>
    <property type="project" value="HPA"/>
</dbReference>
<dbReference type="GO" id="GO:0008270">
    <property type="term" value="F:zinc ion binding"/>
    <property type="evidence" value="ECO:0007669"/>
    <property type="project" value="UniProtKB-KW"/>
</dbReference>
<dbReference type="GO" id="GO:0030308">
    <property type="term" value="P:negative regulation of cell growth"/>
    <property type="evidence" value="ECO:0000318"/>
    <property type="project" value="GO_Central"/>
</dbReference>
<dbReference type="GO" id="GO:0008285">
    <property type="term" value="P:negative regulation of cell population proliferation"/>
    <property type="evidence" value="ECO:0000304"/>
    <property type="project" value="ProtInc"/>
</dbReference>
<dbReference type="GO" id="GO:0051726">
    <property type="term" value="P:regulation of cell cycle"/>
    <property type="evidence" value="ECO:0007669"/>
    <property type="project" value="UniProtKB-KW"/>
</dbReference>
<dbReference type="CDD" id="cd16787">
    <property type="entry name" value="mRING-HC-C3HC5_CGRF1"/>
    <property type="match status" value="1"/>
</dbReference>
<dbReference type="FunFam" id="3.30.40.10:FF:000421">
    <property type="entry name" value="Cell growth regulator with ring finger domain 1"/>
    <property type="match status" value="1"/>
</dbReference>
<dbReference type="Gene3D" id="3.30.40.10">
    <property type="entry name" value="Zinc/RING finger domain, C3HC4 (zinc finger)"/>
    <property type="match status" value="1"/>
</dbReference>
<dbReference type="InterPro" id="IPR042496">
    <property type="entry name" value="CGRF1"/>
</dbReference>
<dbReference type="InterPro" id="IPR001841">
    <property type="entry name" value="Znf_RING"/>
</dbReference>
<dbReference type="InterPro" id="IPR013083">
    <property type="entry name" value="Znf_RING/FYVE/PHD"/>
</dbReference>
<dbReference type="PANTHER" id="PTHR15379">
    <property type="entry name" value="CELL GROWTH REGULATOR WITH RING FINGER DOMAIN PROTEIN 1"/>
    <property type="match status" value="1"/>
</dbReference>
<dbReference type="PANTHER" id="PTHR15379:SF2">
    <property type="entry name" value="CELL GROWTH REGULATOR WITH RING FINGER DOMAIN PROTEIN 1"/>
    <property type="match status" value="1"/>
</dbReference>
<dbReference type="Pfam" id="PF13920">
    <property type="entry name" value="zf-C3HC4_3"/>
    <property type="match status" value="1"/>
</dbReference>
<dbReference type="SMART" id="SM00184">
    <property type="entry name" value="RING"/>
    <property type="match status" value="1"/>
</dbReference>
<dbReference type="SUPFAM" id="SSF57850">
    <property type="entry name" value="RING/U-box"/>
    <property type="match status" value="1"/>
</dbReference>
<dbReference type="PROSITE" id="PS50089">
    <property type="entry name" value="ZF_RING_2"/>
    <property type="match status" value="1"/>
</dbReference>
<protein>
    <recommendedName>
        <fullName>Cell growth regulator with RING finger domain protein 1</fullName>
    </recommendedName>
    <alternativeName>
        <fullName>Cell growth regulatory gene 19 protein</fullName>
    </alternativeName>
    <alternativeName>
        <fullName>RING finger protein 197</fullName>
    </alternativeName>
</protein>
<gene>
    <name type="primary">CGRRF1</name>
    <name type="synonym">CGR19</name>
    <name type="synonym">RNF197</name>
</gene>